<keyword id="KW-0143">Chaperone</keyword>
<keyword id="KW-0963">Cytoplasm</keyword>
<keyword id="KW-0996">Nickel insertion</keyword>
<reference key="1">
    <citation type="journal article" date="2011" name="Stand. Genomic Sci.">
        <title>Complete genome sequence of the filamentous gliding predatory bacterium Herpetosiphon aurantiacus type strain (114-95(T)).</title>
        <authorList>
            <person name="Kiss H."/>
            <person name="Nett M."/>
            <person name="Domin N."/>
            <person name="Martin K."/>
            <person name="Maresca J.A."/>
            <person name="Copeland A."/>
            <person name="Lapidus A."/>
            <person name="Lucas S."/>
            <person name="Berry K.W."/>
            <person name="Glavina Del Rio T."/>
            <person name="Dalin E."/>
            <person name="Tice H."/>
            <person name="Pitluck S."/>
            <person name="Richardson P."/>
            <person name="Bruce D."/>
            <person name="Goodwin L."/>
            <person name="Han C."/>
            <person name="Detter J.C."/>
            <person name="Schmutz J."/>
            <person name="Brettin T."/>
            <person name="Land M."/>
            <person name="Hauser L."/>
            <person name="Kyrpides N.C."/>
            <person name="Ivanova N."/>
            <person name="Goeker M."/>
            <person name="Woyke T."/>
            <person name="Klenk H.P."/>
            <person name="Bryant D.A."/>
        </authorList>
    </citation>
    <scope>NUCLEOTIDE SEQUENCE [LARGE SCALE GENOMIC DNA]</scope>
    <source>
        <strain>ATCC 23779 / DSM 785 / 114-95</strain>
    </source>
</reference>
<protein>
    <recommendedName>
        <fullName evidence="1">Urease accessory protein UreD</fullName>
    </recommendedName>
</protein>
<comment type="function">
    <text evidence="1">Required for maturation of urease via the functional incorporation of the urease nickel metallocenter.</text>
</comment>
<comment type="subunit">
    <text evidence="1">UreD, UreF and UreG form a complex that acts as a GTP-hydrolysis-dependent molecular chaperone, activating the urease apoprotein by helping to assemble the nickel containing metallocenter of UreC. The UreE protein probably delivers the nickel.</text>
</comment>
<comment type="subcellular location">
    <subcellularLocation>
        <location evidence="1">Cytoplasm</location>
    </subcellularLocation>
</comment>
<comment type="similarity">
    <text evidence="1">Belongs to the UreD family.</text>
</comment>
<accession>A9AZE9</accession>
<feature type="chain" id="PRO_0000346568" description="Urease accessory protein UreD">
    <location>
        <begin position="1"/>
        <end position="287"/>
    </location>
</feature>
<evidence type="ECO:0000255" key="1">
    <source>
        <dbReference type="HAMAP-Rule" id="MF_01384"/>
    </source>
</evidence>
<dbReference type="EMBL" id="CP000875">
    <property type="protein sequence ID" value="ABX05093.1"/>
    <property type="molecule type" value="Genomic_DNA"/>
</dbReference>
<dbReference type="SMR" id="A9AZE9"/>
<dbReference type="STRING" id="316274.Haur_2455"/>
<dbReference type="KEGG" id="hau:Haur_2455"/>
<dbReference type="eggNOG" id="COG0829">
    <property type="taxonomic scope" value="Bacteria"/>
</dbReference>
<dbReference type="HOGENOM" id="CLU_056339_5_1_0"/>
<dbReference type="InParanoid" id="A9AZE9"/>
<dbReference type="Proteomes" id="UP000000787">
    <property type="component" value="Chromosome"/>
</dbReference>
<dbReference type="GO" id="GO:0005737">
    <property type="term" value="C:cytoplasm"/>
    <property type="evidence" value="ECO:0007669"/>
    <property type="project" value="UniProtKB-SubCell"/>
</dbReference>
<dbReference type="GO" id="GO:0016151">
    <property type="term" value="F:nickel cation binding"/>
    <property type="evidence" value="ECO:0007669"/>
    <property type="project" value="UniProtKB-UniRule"/>
</dbReference>
<dbReference type="HAMAP" id="MF_01384">
    <property type="entry name" value="UreD"/>
    <property type="match status" value="1"/>
</dbReference>
<dbReference type="InterPro" id="IPR002669">
    <property type="entry name" value="UreD"/>
</dbReference>
<dbReference type="PANTHER" id="PTHR33643">
    <property type="entry name" value="UREASE ACCESSORY PROTEIN D"/>
    <property type="match status" value="1"/>
</dbReference>
<dbReference type="PANTHER" id="PTHR33643:SF1">
    <property type="entry name" value="UREASE ACCESSORY PROTEIN D"/>
    <property type="match status" value="1"/>
</dbReference>
<dbReference type="Pfam" id="PF01774">
    <property type="entry name" value="UreD"/>
    <property type="match status" value="1"/>
</dbReference>
<gene>
    <name evidence="1" type="primary">ureD</name>
    <name type="ordered locus">Haur_2455</name>
</gene>
<sequence>MQTATRLERMHGHLALDFTLKQQRTRLTVREHRPPLQVVRDFGLADGTSFVHLHNVAGGVLAGDQLTTTIKLAASTKAQLTTTSSTRIYRSDGEQIAYQQVQATLAEQSLLEYWPDTTIPFAESLYQQQTRIDLAADAGLCWWEFLAPGREAYGERFAYRQLRLDCDIYALGRPILLDRMRLQPSLQQLSNPLYFGKYSYLATGYICRVGWDAVQWKALEAELMAFAASQTKLGRCLWGVSCLAAHGLVIRGLSSNSRDLLATAFDYWRFAKQALYGTTPNLPRKIY</sequence>
<organism>
    <name type="scientific">Herpetosiphon aurantiacus (strain ATCC 23779 / DSM 785 / 114-95)</name>
    <dbReference type="NCBI Taxonomy" id="316274"/>
    <lineage>
        <taxon>Bacteria</taxon>
        <taxon>Bacillati</taxon>
        <taxon>Chloroflexota</taxon>
        <taxon>Chloroflexia</taxon>
        <taxon>Herpetosiphonales</taxon>
        <taxon>Herpetosiphonaceae</taxon>
        <taxon>Herpetosiphon</taxon>
    </lineage>
</organism>
<name>URED_HERA2</name>
<proteinExistence type="inferred from homology"/>